<organism>
    <name type="scientific">Synechococcus sp. (strain CC9311)</name>
    <dbReference type="NCBI Taxonomy" id="64471"/>
    <lineage>
        <taxon>Bacteria</taxon>
        <taxon>Bacillati</taxon>
        <taxon>Cyanobacteriota</taxon>
        <taxon>Cyanophyceae</taxon>
        <taxon>Synechococcales</taxon>
        <taxon>Synechococcaceae</taxon>
        <taxon>Synechococcus</taxon>
    </lineage>
</organism>
<proteinExistence type="inferred from homology"/>
<keyword id="KW-0560">Oxidoreductase</keyword>
<keyword id="KW-1185">Reference proteome</keyword>
<feature type="chain" id="PRO_1000046931" description="Phycoerythrobilin:ferredoxin oxidoreductase">
    <location>
        <begin position="1"/>
        <end position="257"/>
    </location>
</feature>
<gene>
    <name evidence="1" type="primary">pebB</name>
    <name type="ordered locus">sync_0490</name>
</gene>
<comment type="function">
    <text evidence="1">Catalyzes the two-electron reduction of the C2 and C3(1) diene system of 15,16-dihydrobiliverdin.</text>
</comment>
<comment type="catalytic activity">
    <reaction evidence="1">
        <text>(3Z)-phycoerythrobilin + oxidized 2[4Fe-4S]-[ferredoxin] = 15,16-dihydrobiliverdin + reduced 2[4Fe-4S]-[ferredoxin] + 2 H(+)</text>
        <dbReference type="Rhea" id="RHEA:22092"/>
        <dbReference type="Rhea" id="RHEA-COMP:10002"/>
        <dbReference type="Rhea" id="RHEA-COMP:10004"/>
        <dbReference type="ChEBI" id="CHEBI:15378"/>
        <dbReference type="ChEBI" id="CHEBI:33722"/>
        <dbReference type="ChEBI" id="CHEBI:33723"/>
        <dbReference type="ChEBI" id="CHEBI:57438"/>
        <dbReference type="ChEBI" id="CHEBI:57899"/>
        <dbReference type="EC" id="1.3.7.3"/>
    </reaction>
</comment>
<comment type="similarity">
    <text evidence="1">Belongs to the HY2 family.</text>
</comment>
<sequence length="257" mass="29110">MTIQRLKSTDPVSIEGWSWQPFLEDAIKSLGGLNFEPYPVPDRFLQREDQTGSKSKPISVTTATWACKTEKFRQVRAACVSAGSAASVLNFVINPNSTYDLPFFGGDLVTLPSGHLLALDLQPAIKTDEVHTTHVWDQLIPIFERWRDQLPYGGPIPEEAQPFFSPGFLWTRLPLGEEGDDLIQSVVRPAFNEYLELYLQLAASAERVNAERSDFLLQGQRKYTDYRAEKDPARGMLTRFHGSEWTEAYIHTVLFDL</sequence>
<name>PEBB_SYNS3</name>
<reference key="1">
    <citation type="journal article" date="2006" name="Proc. Natl. Acad. Sci. U.S.A.">
        <title>Genome sequence of Synechococcus CC9311: insights into adaptation to a coastal environment.</title>
        <authorList>
            <person name="Palenik B."/>
            <person name="Ren Q."/>
            <person name="Dupont C.L."/>
            <person name="Myers G.S."/>
            <person name="Heidelberg J.F."/>
            <person name="Badger J.H."/>
            <person name="Madupu R."/>
            <person name="Nelson W.C."/>
            <person name="Brinkac L.M."/>
            <person name="Dodson R.J."/>
            <person name="Durkin A.S."/>
            <person name="Daugherty S.C."/>
            <person name="Sullivan S.A."/>
            <person name="Khouri H."/>
            <person name="Mohamoud Y."/>
            <person name="Halpin R."/>
            <person name="Paulsen I.T."/>
        </authorList>
    </citation>
    <scope>NUCLEOTIDE SEQUENCE [LARGE SCALE GENOMIC DNA]</scope>
    <source>
        <strain>CC9311</strain>
    </source>
</reference>
<protein>
    <recommendedName>
        <fullName evidence="1">Phycoerythrobilin:ferredoxin oxidoreductase</fullName>
        <ecNumber evidence="1">1.3.7.3</ecNumber>
    </recommendedName>
</protein>
<dbReference type="EC" id="1.3.7.3" evidence="1"/>
<dbReference type="EMBL" id="CP000435">
    <property type="protein sequence ID" value="ABI46568.1"/>
    <property type="molecule type" value="Genomic_DNA"/>
</dbReference>
<dbReference type="RefSeq" id="WP_011618449.1">
    <property type="nucleotide sequence ID" value="NC_008319.1"/>
</dbReference>
<dbReference type="SMR" id="Q0ICV5"/>
<dbReference type="STRING" id="64471.sync_0490"/>
<dbReference type="KEGG" id="syg:sync_0490"/>
<dbReference type="eggNOG" id="ENOG502Z8GK">
    <property type="taxonomic scope" value="Bacteria"/>
</dbReference>
<dbReference type="HOGENOM" id="CLU_086208_1_0_3"/>
<dbReference type="OrthoDB" id="421401at2"/>
<dbReference type="Proteomes" id="UP000001961">
    <property type="component" value="Chromosome"/>
</dbReference>
<dbReference type="GO" id="GO:0050897">
    <property type="term" value="F:cobalt ion binding"/>
    <property type="evidence" value="ECO:0007669"/>
    <property type="project" value="InterPro"/>
</dbReference>
<dbReference type="GO" id="GO:0050618">
    <property type="term" value="F:phycoerythrobilin:ferredoxin oxidoreductase activity"/>
    <property type="evidence" value="ECO:0007669"/>
    <property type="project" value="UniProtKB-UniRule"/>
</dbReference>
<dbReference type="GO" id="GO:0010024">
    <property type="term" value="P:phytochromobilin biosynthetic process"/>
    <property type="evidence" value="ECO:0007669"/>
    <property type="project" value="InterPro"/>
</dbReference>
<dbReference type="Gene3D" id="3.40.1500.20">
    <property type="match status" value="1"/>
</dbReference>
<dbReference type="HAMAP" id="MF_00793">
    <property type="entry name" value="PebB"/>
    <property type="match status" value="1"/>
</dbReference>
<dbReference type="InterPro" id="IPR009249">
    <property type="entry name" value="Ferredoxin-dep_bilin_Rdtase"/>
</dbReference>
<dbReference type="InterPro" id="IPR022827">
    <property type="entry name" value="Phycoerythrobilin_Fdx_Rdtase"/>
</dbReference>
<dbReference type="NCBIfam" id="NF009722">
    <property type="entry name" value="PRK13249.1"/>
    <property type="match status" value="1"/>
</dbReference>
<dbReference type="PANTHER" id="PTHR34557">
    <property type="entry name" value="PHYTOCHROMOBILIN:FERREDOXIN OXIDOREDUCTASE, CHLOROPLASTIC"/>
    <property type="match status" value="1"/>
</dbReference>
<dbReference type="PANTHER" id="PTHR34557:SF1">
    <property type="entry name" value="PHYTOCHROMOBILIN:FERREDOXIN OXIDOREDUCTASE, CHLOROPLASTIC"/>
    <property type="match status" value="1"/>
</dbReference>
<dbReference type="Pfam" id="PF05996">
    <property type="entry name" value="Fe_bilin_red"/>
    <property type="match status" value="1"/>
</dbReference>
<evidence type="ECO:0000255" key="1">
    <source>
        <dbReference type="HAMAP-Rule" id="MF_00793"/>
    </source>
</evidence>
<accession>Q0ICV5</accession>